<feature type="chain" id="PRO_0000054780" description="Norsolorinic acid ketoreductase stcE">
    <location>
        <begin position="1"/>
        <end position="263"/>
    </location>
</feature>
<feature type="active site" description="Proton donor" evidence="2">
    <location>
        <position position="177"/>
    </location>
</feature>
<feature type="active site" description="Lowers pKa of active site Tyr" evidence="2">
    <location>
        <position position="181"/>
    </location>
</feature>
<feature type="binding site" evidence="1">
    <location>
        <position position="29"/>
    </location>
    <ligand>
        <name>NADP(+)</name>
        <dbReference type="ChEBI" id="CHEBI:58349"/>
    </ligand>
</feature>
<feature type="binding site" evidence="1">
    <location>
        <position position="76"/>
    </location>
    <ligand>
        <name>NADP(+)</name>
        <dbReference type="ChEBI" id="CHEBI:58349"/>
    </ligand>
</feature>
<feature type="binding site" evidence="2">
    <location>
        <position position="105"/>
    </location>
    <ligand>
        <name>NADP(+)</name>
        <dbReference type="ChEBI" id="CHEBI:58349"/>
    </ligand>
</feature>
<feature type="binding site" evidence="2">
    <location>
        <position position="177"/>
    </location>
    <ligand>
        <name>NADP(+)</name>
        <dbReference type="ChEBI" id="CHEBI:58349"/>
    </ligand>
</feature>
<feature type="binding site" evidence="2">
    <location>
        <position position="181"/>
    </location>
    <ligand>
        <name>NADP(+)</name>
        <dbReference type="ChEBI" id="CHEBI:58349"/>
    </ligand>
</feature>
<feature type="binding site" evidence="2">
    <location>
        <position position="208"/>
    </location>
    <ligand>
        <name>NADP(+)</name>
        <dbReference type="ChEBI" id="CHEBI:58349"/>
    </ligand>
</feature>
<feature type="binding site" evidence="1">
    <location>
        <position position="210"/>
    </location>
    <ligand>
        <name>NADP(+)</name>
        <dbReference type="ChEBI" id="CHEBI:58349"/>
    </ligand>
</feature>
<feature type="sequence conflict" description="In Ref. 1; AAC49194." evidence="15" ref="1">
    <original>TGASRGLGR</original>
    <variation>NRCQQG</variation>
    <location>
        <begin position="23"/>
        <end position="31"/>
    </location>
</feature>
<feature type="sequence conflict" description="In Ref. 1; AAC49194." evidence="15" ref="1">
    <original>L</original>
    <variation>V</variation>
    <location>
        <position position="174"/>
    </location>
</feature>
<feature type="sequence conflict" description="In Ref. 1; AAC49194." evidence="15" ref="1">
    <original>QA</original>
    <variation>RS</variation>
    <location>
        <begin position="215"/>
        <end position="216"/>
    </location>
</feature>
<dbReference type="EC" id="1.1.1.349" evidence="3"/>
<dbReference type="EMBL" id="U34740">
    <property type="protein sequence ID" value="AAC49194.1"/>
    <property type="molecule type" value="Genomic_DNA"/>
</dbReference>
<dbReference type="EMBL" id="AACD01000132">
    <property type="protein sequence ID" value="EAA61609.1"/>
    <property type="status" value="ALT_SEQ"/>
    <property type="molecule type" value="Genomic_DNA"/>
</dbReference>
<dbReference type="EMBL" id="BN001304">
    <property type="protein sequence ID" value="CBF80176.1"/>
    <property type="molecule type" value="Genomic_DNA"/>
</dbReference>
<dbReference type="RefSeq" id="XP_681090.1">
    <property type="nucleotide sequence ID" value="XM_675998.1"/>
</dbReference>
<dbReference type="SMR" id="Q00674"/>
<dbReference type="BioGRID" id="1950339">
    <property type="interactions" value="1"/>
</dbReference>
<dbReference type="STRING" id="227321.Q00674"/>
<dbReference type="EnsemblFungi" id="CBF80176">
    <property type="protein sequence ID" value="CBF80176"/>
    <property type="gene ID" value="ANIA_07821"/>
</dbReference>
<dbReference type="VEuPathDB" id="FungiDB:AN7821"/>
<dbReference type="eggNOG" id="KOG1611">
    <property type="taxonomic scope" value="Eukaryota"/>
</dbReference>
<dbReference type="HOGENOM" id="CLU_010194_9_1_1"/>
<dbReference type="InParanoid" id="Q00674"/>
<dbReference type="OMA" id="QFVNYNG"/>
<dbReference type="OrthoDB" id="9876299at2759"/>
<dbReference type="UniPathway" id="UPA00377"/>
<dbReference type="Proteomes" id="UP000000560">
    <property type="component" value="Chromosome IV"/>
</dbReference>
<dbReference type="GO" id="GO:0005737">
    <property type="term" value="C:cytoplasm"/>
    <property type="evidence" value="ECO:0000318"/>
    <property type="project" value="GO_Central"/>
</dbReference>
<dbReference type="GO" id="GO:0140393">
    <property type="term" value="F:norsolorinic acid ketoreductase activity"/>
    <property type="evidence" value="ECO:0007669"/>
    <property type="project" value="RHEA"/>
</dbReference>
<dbReference type="GO" id="GO:0016491">
    <property type="term" value="F:oxidoreductase activity"/>
    <property type="evidence" value="ECO:0000318"/>
    <property type="project" value="GO_Central"/>
</dbReference>
<dbReference type="GO" id="GO:0045461">
    <property type="term" value="P:sterigmatocystin biosynthetic process"/>
    <property type="evidence" value="ECO:0007669"/>
    <property type="project" value="UniProtKB-UniPathway"/>
</dbReference>
<dbReference type="CDD" id="cd05325">
    <property type="entry name" value="carb_red_sniffer_like_SDR_c"/>
    <property type="match status" value="1"/>
</dbReference>
<dbReference type="Gene3D" id="3.40.50.720">
    <property type="entry name" value="NAD(P)-binding Rossmann-like Domain"/>
    <property type="match status" value="1"/>
</dbReference>
<dbReference type="InterPro" id="IPR051468">
    <property type="entry name" value="Fungal_SecMetab_SDRs"/>
</dbReference>
<dbReference type="InterPro" id="IPR036291">
    <property type="entry name" value="NAD(P)-bd_dom_sf"/>
</dbReference>
<dbReference type="InterPro" id="IPR002347">
    <property type="entry name" value="SDR_fam"/>
</dbReference>
<dbReference type="PANTHER" id="PTHR43544:SF7">
    <property type="entry name" value="NADB-LER2"/>
    <property type="match status" value="1"/>
</dbReference>
<dbReference type="PANTHER" id="PTHR43544">
    <property type="entry name" value="SHORT-CHAIN DEHYDROGENASE/REDUCTASE"/>
    <property type="match status" value="1"/>
</dbReference>
<dbReference type="Pfam" id="PF00106">
    <property type="entry name" value="adh_short"/>
    <property type="match status" value="1"/>
</dbReference>
<dbReference type="PRINTS" id="PR00081">
    <property type="entry name" value="GDHRDH"/>
</dbReference>
<dbReference type="SUPFAM" id="SSF51735">
    <property type="entry name" value="NAD(P)-binding Rossmann-fold domains"/>
    <property type="match status" value="1"/>
</dbReference>
<accession>Q00674</accession>
<accession>C8VDU5</accession>
<accession>Q5AV59</accession>
<evidence type="ECO:0000250" key="1">
    <source>
        <dbReference type="UniProtKB" id="L0E2Z4"/>
    </source>
</evidence>
<evidence type="ECO:0000250" key="2">
    <source>
        <dbReference type="UniProtKB" id="O93868"/>
    </source>
</evidence>
<evidence type="ECO:0000250" key="3">
    <source>
        <dbReference type="UniProtKB" id="Q00278"/>
    </source>
</evidence>
<evidence type="ECO:0000250" key="4">
    <source>
        <dbReference type="UniProtKB" id="Q12053"/>
    </source>
</evidence>
<evidence type="ECO:0000269" key="5">
    <source>
    </source>
</evidence>
<evidence type="ECO:0000269" key="6">
    <source>
    </source>
</evidence>
<evidence type="ECO:0000269" key="7">
    <source>
    </source>
</evidence>
<evidence type="ECO:0000269" key="8">
    <source>
    </source>
</evidence>
<evidence type="ECO:0000269" key="9">
    <source>
    </source>
</evidence>
<evidence type="ECO:0000269" key="10">
    <source>
    </source>
</evidence>
<evidence type="ECO:0000269" key="11">
    <source>
    </source>
</evidence>
<evidence type="ECO:0000269" key="12">
    <source>
    </source>
</evidence>
<evidence type="ECO:0000303" key="13">
    <source>
    </source>
</evidence>
<evidence type="ECO:0000303" key="14">
    <source>
    </source>
</evidence>
<evidence type="ECO:0000305" key="15"/>
<evidence type="ECO:0000305" key="16">
    <source>
    </source>
</evidence>
<name>STCE_EMENI</name>
<reference key="1">
    <citation type="journal article" date="1996" name="Proc. Natl. Acad. Sci. U.S.A.">
        <title>Twenty-five coregulated transcripts define a sterigmatocystin gene cluster in Aspergillus nidulans.</title>
        <authorList>
            <person name="Brown D.W."/>
            <person name="Yu J.-H."/>
            <person name="Kelkar H.S."/>
            <person name="Fernandes M."/>
            <person name="Nesbitt T.C."/>
            <person name="Keller N.P."/>
            <person name="Adams T.H."/>
            <person name="Leonard T.J."/>
        </authorList>
    </citation>
    <scope>NUCLEOTIDE SEQUENCE [GENOMIC DNA]</scope>
    <scope>INDUCTION</scope>
    <scope>FUNCTION</scope>
    <scope>PATHWAY</scope>
    <source>
        <strain>FGSC 26</strain>
    </source>
</reference>
<reference key="2">
    <citation type="journal article" date="2005" name="Nature">
        <title>Sequencing of Aspergillus nidulans and comparative analysis with A. fumigatus and A. oryzae.</title>
        <authorList>
            <person name="Galagan J.E."/>
            <person name="Calvo S.E."/>
            <person name="Cuomo C."/>
            <person name="Ma L.-J."/>
            <person name="Wortman J.R."/>
            <person name="Batzoglou S."/>
            <person name="Lee S.-I."/>
            <person name="Bastuerkmen M."/>
            <person name="Spevak C.C."/>
            <person name="Clutterbuck J."/>
            <person name="Kapitonov V."/>
            <person name="Jurka J."/>
            <person name="Scazzocchio C."/>
            <person name="Farman M.L."/>
            <person name="Butler J."/>
            <person name="Purcell S."/>
            <person name="Harris S."/>
            <person name="Braus G.H."/>
            <person name="Draht O."/>
            <person name="Busch S."/>
            <person name="D'Enfert C."/>
            <person name="Bouchier C."/>
            <person name="Goldman G.H."/>
            <person name="Bell-Pedersen D."/>
            <person name="Griffiths-Jones S."/>
            <person name="Doonan J.H."/>
            <person name="Yu J."/>
            <person name="Vienken K."/>
            <person name="Pain A."/>
            <person name="Freitag M."/>
            <person name="Selker E.U."/>
            <person name="Archer D.B."/>
            <person name="Penalva M.A."/>
            <person name="Oakley B.R."/>
            <person name="Momany M."/>
            <person name="Tanaka T."/>
            <person name="Kumagai T."/>
            <person name="Asai K."/>
            <person name="Machida M."/>
            <person name="Nierman W.C."/>
            <person name="Denning D.W."/>
            <person name="Caddick M.X."/>
            <person name="Hynes M."/>
            <person name="Paoletti M."/>
            <person name="Fischer R."/>
            <person name="Miller B.L."/>
            <person name="Dyer P.S."/>
            <person name="Sachs M.S."/>
            <person name="Osmani S.A."/>
            <person name="Birren B.W."/>
        </authorList>
    </citation>
    <scope>NUCLEOTIDE SEQUENCE [LARGE SCALE GENOMIC DNA]</scope>
    <source>
        <strain>FGSC A4 / ATCC 38163 / CBS 112.46 / NRRL 194 / M139</strain>
    </source>
</reference>
<reference key="3">
    <citation type="journal article" date="2009" name="Fungal Genet. Biol.">
        <title>The 2008 update of the Aspergillus nidulans genome annotation: a community effort.</title>
        <authorList>
            <person name="Wortman J.R."/>
            <person name="Gilsenan J.M."/>
            <person name="Joardar V."/>
            <person name="Deegan J."/>
            <person name="Clutterbuck J."/>
            <person name="Andersen M.R."/>
            <person name="Archer D."/>
            <person name="Bencina M."/>
            <person name="Braus G."/>
            <person name="Coutinho P."/>
            <person name="von Dohren H."/>
            <person name="Doonan J."/>
            <person name="Driessen A.J."/>
            <person name="Durek P."/>
            <person name="Espeso E."/>
            <person name="Fekete E."/>
            <person name="Flipphi M."/>
            <person name="Estrada C.G."/>
            <person name="Geysens S."/>
            <person name="Goldman G."/>
            <person name="de Groot P.W."/>
            <person name="Hansen K."/>
            <person name="Harris S.D."/>
            <person name="Heinekamp T."/>
            <person name="Helmstaedt K."/>
            <person name="Henrissat B."/>
            <person name="Hofmann G."/>
            <person name="Homan T."/>
            <person name="Horio T."/>
            <person name="Horiuchi H."/>
            <person name="James S."/>
            <person name="Jones M."/>
            <person name="Karaffa L."/>
            <person name="Karanyi Z."/>
            <person name="Kato M."/>
            <person name="Keller N."/>
            <person name="Kelly D.E."/>
            <person name="Kiel J.A."/>
            <person name="Kim J.M."/>
            <person name="van der Klei I.J."/>
            <person name="Klis F.M."/>
            <person name="Kovalchuk A."/>
            <person name="Krasevec N."/>
            <person name="Kubicek C.P."/>
            <person name="Liu B."/>
            <person name="Maccabe A."/>
            <person name="Meyer V."/>
            <person name="Mirabito P."/>
            <person name="Miskei M."/>
            <person name="Mos M."/>
            <person name="Mullins J."/>
            <person name="Nelson D.R."/>
            <person name="Nielsen J."/>
            <person name="Oakley B.R."/>
            <person name="Osmani S.A."/>
            <person name="Pakula T."/>
            <person name="Paszewski A."/>
            <person name="Paulsen I."/>
            <person name="Pilsyk S."/>
            <person name="Pocsi I."/>
            <person name="Punt P.J."/>
            <person name="Ram A.F."/>
            <person name="Ren Q."/>
            <person name="Robellet X."/>
            <person name="Robson G."/>
            <person name="Seiboth B."/>
            <person name="van Solingen P."/>
            <person name="Specht T."/>
            <person name="Sun J."/>
            <person name="Taheri-Talesh N."/>
            <person name="Takeshita N."/>
            <person name="Ussery D."/>
            <person name="vanKuyk P.A."/>
            <person name="Visser H."/>
            <person name="van de Vondervoort P.J."/>
            <person name="de Vries R.P."/>
            <person name="Walton J."/>
            <person name="Xiang X."/>
            <person name="Xiong Y."/>
            <person name="Zeng A.P."/>
            <person name="Brandt B.W."/>
            <person name="Cornell M.J."/>
            <person name="van den Hondel C.A."/>
            <person name="Visser J."/>
            <person name="Oliver S.G."/>
            <person name="Turner G."/>
        </authorList>
    </citation>
    <scope>GENOME REANNOTATION</scope>
    <source>
        <strain>FGSC A4 / ATCC 38163 / CBS 112.46 / NRRL 194 / M139</strain>
    </source>
</reference>
<reference key="4">
    <citation type="journal article" date="1994" name="Appl. Environ. Microbiol.">
        <title>Aspergillus nidulans verA is required for production of the mycotoxin sterigmatocystin.</title>
        <authorList>
            <person name="Keller N.P."/>
            <person name="Kantz N.J."/>
            <person name="Adams T.H."/>
        </authorList>
    </citation>
    <scope>FUNCTION</scope>
    <scope>INDUCTION</scope>
</reference>
<reference key="5">
    <citation type="journal article" date="1995" name="Appl. Environ. Microbiol.">
        <title>StcS, a putative P-450 monooxygenase, is required for the conversion of versicolorin A to sterigmatocystin in Aspergillus nidulans.</title>
        <authorList>
            <person name="Keller N.P."/>
            <person name="Segner S."/>
            <person name="Bhatnagar D."/>
            <person name="Adams T.H."/>
        </authorList>
    </citation>
    <scope>FUNCTION</scope>
</reference>
<reference key="6">
    <citation type="journal article" date="1995" name="J. Bacteriol.">
        <title>Sterigmatocystin biosynthesis in Aspergillus nidulans requires a novel type I polyketide synthase.</title>
        <authorList>
            <person name="Yu J.-H."/>
            <person name="Leonard T.J."/>
        </authorList>
    </citation>
    <scope>FUNCTION</scope>
    <source>
        <strain>FGSC A4 / ATCC 38163 / CBS 112.46 / NRRL 194 / M139</strain>
    </source>
</reference>
<reference key="7">
    <citation type="journal article" date="1996" name="Appl. Environ. Microbiol.">
        <title>Aspergillus nidulans stcP encodes an O-methyltransferase that is required for sterigmatocystin biosynthesis.</title>
        <authorList>
            <person name="Kelkar H.S."/>
            <person name="Keller N.P."/>
            <person name="Adams T.H."/>
        </authorList>
    </citation>
    <scope>FUNCTION</scope>
</reference>
<reference key="8">
    <citation type="journal article" date="1996" name="Proc. Natl. Acad. Sci. U.S.A.">
        <title>Aspergillus has distinct fatty acid synthases for primary and secondary metabolism.</title>
        <authorList>
            <person name="Brown D.W."/>
            <person name="Adams T.H."/>
            <person name="Keller N.P."/>
        </authorList>
    </citation>
    <scope>FUNCTION</scope>
</reference>
<reference key="9">
    <citation type="journal article" date="1997" name="J. Biol. Chem.">
        <title>Aspergillus nidulans stcL encodes a putative cytochrome P-450 monooxygenase required for bisfuran desaturation during aflatoxin/sterigmatocystin biosynthesis.</title>
        <authorList>
            <person name="Kelkar H.S."/>
            <person name="Skloss T.W."/>
            <person name="Haw J.F."/>
            <person name="Keller N.P."/>
            <person name="Adams T.H."/>
        </authorList>
    </citation>
    <scope>FUNCTION</scope>
</reference>
<reference key="10">
    <citation type="journal article" date="1998" name="Mol. Microbiol.">
        <title>Sequence-specific binding by Aspergillus nidulans aflR, a C6 zinc cluster protein regulating mycotoxin biosynthesis.</title>
        <authorList>
            <person name="Fernandes M."/>
            <person name="Keller N.P."/>
            <person name="Adams T.H."/>
        </authorList>
    </citation>
    <scope>INDUCTION</scope>
</reference>
<reference key="11">
    <citation type="journal article" date="2000" name="Appl. Environ. Microbiol.">
        <title>Requirement of monooxygenase-mediated steps for sterigmatocystin biosynthesis by Aspergillus nidulans.</title>
        <authorList>
            <person name="Keller N.P."/>
            <person name="Watanabe C.M."/>
            <person name="Kelkar H.S."/>
            <person name="Adams T.H."/>
            <person name="Townsend C.A."/>
        </authorList>
    </citation>
    <scope>FUNCTION</scope>
</reference>
<reference key="12">
    <citation type="journal article" date="2012" name="Metabolites">
        <title>Genetics of polyketide metabolism in Aspergillus nidulans.</title>
        <authorList>
            <person name="Klejnstrup M.L."/>
            <person name="Frandsen R.J."/>
            <person name="Holm D.K."/>
            <person name="Nielsen M.T."/>
            <person name="Mortensen U.H."/>
            <person name="Larsen T.O."/>
            <person name="Nielsen J.B."/>
        </authorList>
    </citation>
    <scope>REVIEW ON STERIGMATOCYSTIN BIOSYNTHESIS</scope>
</reference>
<gene>
    <name evidence="14" type="primary">stcE</name>
    <name type="ORF">AN7821</name>
</gene>
<protein>
    <recommendedName>
        <fullName evidence="14">Norsolorinic acid ketoreductase stcE</fullName>
        <ecNumber evidence="3">1.1.1.349</ecNumber>
    </recommendedName>
    <alternativeName>
        <fullName evidence="15">Short chain dehydrogenase stcE</fullName>
    </alternativeName>
    <alternativeName>
        <fullName evidence="14">Sterigmatocystin biosynthesis cluster protein E</fullName>
    </alternativeName>
</protein>
<sequence>MPSAAVSVPEVPSSDRKTVYLVTGASRGLGRGLVQAFLLRPNSIVIAGLRNRTSQAGALDALPRGENSSLIAVQLDSGSKSDPADAVSILQRDYGITHLDVVIANAAIAANYGPASTMPLEYLETHMQINAYAALLLFQATRVLLQAAKSPQFICVGAPISTITEMESCARAPLTNYALSKLAACYLVRKIHFENKWLVAYIVDPGHIQSDMGAQAARLFGRKEAPTTIEESVAGICARMTEADKNTTSGRFILFSDGSDVPW</sequence>
<keyword id="KW-0521">NADP</keyword>
<keyword id="KW-0560">Oxidoreductase</keyword>
<keyword id="KW-1185">Reference proteome</keyword>
<keyword id="KW-0843">Virulence</keyword>
<organism>
    <name type="scientific">Emericella nidulans (strain FGSC A4 / ATCC 38163 / CBS 112.46 / NRRL 194 / M139)</name>
    <name type="common">Aspergillus nidulans</name>
    <dbReference type="NCBI Taxonomy" id="227321"/>
    <lineage>
        <taxon>Eukaryota</taxon>
        <taxon>Fungi</taxon>
        <taxon>Dikarya</taxon>
        <taxon>Ascomycota</taxon>
        <taxon>Pezizomycotina</taxon>
        <taxon>Eurotiomycetes</taxon>
        <taxon>Eurotiomycetidae</taxon>
        <taxon>Eurotiales</taxon>
        <taxon>Aspergillaceae</taxon>
        <taxon>Aspergillus</taxon>
        <taxon>Aspergillus subgen. Nidulantes</taxon>
    </lineage>
</organism>
<comment type="function">
    <text evidence="4 5 6 8 9 10 11 13 16">Short chain dehydrogenase; part of the gene cluster that mediates the biosynthesis of sterigmatocystin (ST), a polyketide-derived furanocoumarin which is part of the most toxic and carcinogenic compounds among the known mycotoxins (PubMed:8643646). The first step in the biosynthesis of sterigmatocystin is the production of hexanoate by the fatty acid synthase (FAS) units stcJ and stcK (PubMed:8962148). The polyketide backbone is assembled by the non-reducing polyketide synthase stcA by condensation of the starter hexanoyl-CoA and 7 malonyl-CoA extender units followed by cyclization and release of norsolorinic acid (By similarity). Norsolorinic acid is the first stable intermediate in the biosynthesis of sterigmatocystin and is converted into averantin (AVN) by the ketoreductase stcE which reduces the hexanoate ketone to an alcohol (Probable) (PubMed:8643646). Averantin is then oxidized into 5'-hydroxyaverantin (HAVN) by the cytochrome P450 monooxygenase stcF (PubMed:10618248). 5'-hydroxyaverantin is further converted to 5'-oxyaverantin (OAVN) by the 5'-hydroxyaverantin dehydrogenase stcG (PubMed:24957370). The next step is the conversion of OAVN into averufin (AVF) which is catalyzed by a yet to be identified enzyme (PubMed:24957370). The cytochrome P450 monooxygenase stcB and the flavin-binding monooxygenase stcW are both required for the conversion of averufin to 1-hydroxyversicolorone (PubMed:10618248). The esterase stcI probably catalyzes the formation of versiconal hemiacetal acetate from 1-hydroxyversicolorone (PubMed:24957370). The oxydoreductase stcN then probably catalyzes the biosynthetic step from versiconal to versicolorin B (VERB) (PubMed:24957370). The next step is performed by the versicolorin B desaturase stcL to produce versicolorin A (VERA) (PubMed:8999832). The ketoreductase stcU and the cytochrome P450 monooxygenase stcS are involved in the conversion of versicolorin A to demethylsterigmatocystin (PubMed:7486998). The Baeyer-Villiger oxidas stcQ and the reductase stcR might be involved in the biosynthetic step from versicolorin A to demethylsterigmatocystin (PubMed:24957370). The final step in the biosynthesis of sterigmatocystin is the methylation of demethylsterigmatocystin catalyzed by the methyltransferase stcP (PubMed:8900026).</text>
</comment>
<comment type="catalytic activity">
    <reaction evidence="3">
        <text>(1'S)-averantin + NADP(+) = norsolorinic acid + NADPH + H(+)</text>
        <dbReference type="Rhea" id="RHEA:35447"/>
        <dbReference type="ChEBI" id="CHEBI:15378"/>
        <dbReference type="ChEBI" id="CHEBI:57783"/>
        <dbReference type="ChEBI" id="CHEBI:58349"/>
        <dbReference type="ChEBI" id="CHEBI:71533"/>
        <dbReference type="ChEBI" id="CHEBI:77899"/>
        <dbReference type="EC" id="1.1.1.349"/>
    </reaction>
</comment>
<comment type="pathway">
    <text evidence="8">Mycotoxin biosynthesis; sterigmatocystin biosynthesis.</text>
</comment>
<comment type="induction">
    <text evidence="7 8 12">The genes forming the sterigmatocystin biosynthesis cluster are co-regulated and induced on oatmeal porridge or the fungal isolates were grown either on oatmeal porridge or in YEC medium (0.2% yeast extract, 5.0% corn steep liquor) (PubMed:8017929, PubMed:8643646). Expression is positively regulated by the cluster-specific transcription factor aflR that binds the palindromic sequence 5'-TCG(N5)CGA-3'found in the promoter (PubMed:9680223).</text>
</comment>
<comment type="similarity">
    <text evidence="15">Belongs to the short-chain dehydrogenases/reductases (SDR) family.</text>
</comment>
<comment type="sequence caution" evidence="15">
    <conflict type="erroneous gene model prediction">
        <sequence resource="EMBL-CDS" id="EAA61609"/>
    </conflict>
</comment>
<proteinExistence type="evidence at transcript level"/>